<sequence length="1384" mass="152789">MSIQPSEVAASSARTDTREALGIEESAFDCVSITVASPETIRKWSKGEVKNPETINYRTFKPEPGGLFCQKIFGPVRDYECACGKYKRIKYKDVVCDRCGVEVTIARVRRERMGHIELAVPVAHIWFLKSMPSRLGLLLDMTARSLERVIYYENYMVIDPGKTPLEPHQLLTDTEYRQAIDEYGEDSFVAKMGAEAVRDALVKTDLEATVAELQEQMRATKSKQIKKKLSKRLKVIQGFIHSKSRPEWMVLEVLPVIPPDLRPLVPLEGGRFATSDLNDLYRRVINRNNRLRNLMQLKTPDVIIHNEKRMLQEAVDALFDNGRHGRPVTGAGNRPLKSLSDMLKGKQGRFRQNLLGKRVDYSGRSVIVIGPELKLHQCGLPKKMALVLFEPFIIRRLKELGFVHTVRGARKMIEKKSPEVWDILEEVTKGHPVLLNRAPTLHRLSIQAFEPVLIEGEAIRVHPLVCTAYNADFDGDQMAVHVPLSLEAIMECKLLMMATSNIFSPSSGKPILTPSQDIVLGAYYLTVEPRKKPAKDERVPLLSGLQEVLYAVADGAMKKHDWVEVPNPDHGRETIFGNKEKKVLRTTVGRVIFNQIWPAGLGFVNFPVPKSKLGDLILNTHKLTGNQATVETLDRLKELGFTTAMQAGISIGIDDMIIPEAKKDIVAETRKKIAEVEAQFNKGIITEGERKNKVIDLWTGTTDRIAKEVFAKLESNEGRNEVNPVYIMMDSGARGNKQQVRQLCGTRGLMAKPSGEIIERPILSSFREGLTVLEYFISTHGARKGLADTALKTADAGYLTRKLCDVAMDVIIAEDDCGSRDGVWKKAIFEGDDEIVSLRERIVGRFSSDDVFNPINPSEILVGSGELITEEIATRVDELGIERVKVMSPLTSTAQHGIDGKSYGINPATGKVAKVGDSVGIIAAQSIGEPGTQLTMRTFHIGGVASGGFKTPEIKVRASGTVRYRGLRLVETADGGSIVLNKTGTIQIVDAEEKELETYNIVVGSFLHVGDGEQIQKGAILAQWDPYNIPVLSEKGGTLAFKDMIPGVTVKRELDESSGRIATVVIEHKEDLNPQIEIRDPKGKPLAAYSIPVGAQIAVNEGDIIQPGALLAKTPRQASKTKDITGGLPRVAELFEARRPKDAAEMSRIDGIVSFEGTVRGKRKLVVKNDDTAQEEEHLIATGKHIIVQPGDVVHKGQHLTEGAADPHEILEILGPSALYDFLISQVQEVYRLQGVAINDKHIEIIIRQMLRKVRITDPGDTENFWGEQVDRAQFLAENRRIEEAGGKPAEAEPILLGITKASLETESFISAASFQETTRVLTDASTLGKVDMLKGFKENVIMGHLIPAGTGLPKYKNLKITLPFGADLPVEPEQPAPAATETA</sequence>
<comment type="function">
    <text evidence="1">DNA-dependent RNA polymerase catalyzes the transcription of DNA into RNA using the four ribonucleoside triphosphates as substrates.</text>
</comment>
<comment type="catalytic activity">
    <reaction evidence="1">
        <text>RNA(n) + a ribonucleoside 5'-triphosphate = RNA(n+1) + diphosphate</text>
        <dbReference type="Rhea" id="RHEA:21248"/>
        <dbReference type="Rhea" id="RHEA-COMP:14527"/>
        <dbReference type="Rhea" id="RHEA-COMP:17342"/>
        <dbReference type="ChEBI" id="CHEBI:33019"/>
        <dbReference type="ChEBI" id="CHEBI:61557"/>
        <dbReference type="ChEBI" id="CHEBI:140395"/>
        <dbReference type="EC" id="2.7.7.6"/>
    </reaction>
</comment>
<comment type="cofactor">
    <cofactor evidence="1">
        <name>Mg(2+)</name>
        <dbReference type="ChEBI" id="CHEBI:18420"/>
    </cofactor>
    <text evidence="1">Binds 1 Mg(2+) ion per subunit.</text>
</comment>
<comment type="cofactor">
    <cofactor evidence="1">
        <name>Zn(2+)</name>
        <dbReference type="ChEBI" id="CHEBI:29105"/>
    </cofactor>
    <text evidence="2">Binds 1 Zn(2+) ion per subunit; 2 are expected compared to other organisms.</text>
</comment>
<comment type="subunit">
    <text evidence="1">The RNAP catalytic core consists of 2 alpha, 1 beta, 1 beta' and 1 omega subunit. When a sigma factor is associated with the core the holoenzyme is formed, which can initiate transcription.</text>
</comment>
<comment type="similarity">
    <text evidence="1">Belongs to the RNA polymerase beta' chain family.</text>
</comment>
<accession>B1ZPB7</accession>
<reference key="1">
    <citation type="journal article" date="2011" name="J. Bacteriol.">
        <title>Genome sequence of the verrucomicrobium Opitutus terrae PB90-1, an abundant inhabitant of rice paddy soil ecosystems.</title>
        <authorList>
            <person name="van Passel M.W."/>
            <person name="Kant R."/>
            <person name="Palva A."/>
            <person name="Copeland A."/>
            <person name="Lucas S."/>
            <person name="Lapidus A."/>
            <person name="Glavina del Rio T."/>
            <person name="Pitluck S."/>
            <person name="Goltsman E."/>
            <person name="Clum A."/>
            <person name="Sun H."/>
            <person name="Schmutz J."/>
            <person name="Larimer F.W."/>
            <person name="Land M.L."/>
            <person name="Hauser L."/>
            <person name="Kyrpides N."/>
            <person name="Mikhailova N."/>
            <person name="Richardson P.P."/>
            <person name="Janssen P.H."/>
            <person name="de Vos W.M."/>
            <person name="Smidt H."/>
        </authorList>
    </citation>
    <scope>NUCLEOTIDE SEQUENCE [LARGE SCALE GENOMIC DNA]</scope>
    <source>
        <strain>DSM 11246 / JCM 15787 / PB90-1</strain>
    </source>
</reference>
<keyword id="KW-0240">DNA-directed RNA polymerase</keyword>
<keyword id="KW-0460">Magnesium</keyword>
<keyword id="KW-0479">Metal-binding</keyword>
<keyword id="KW-0548">Nucleotidyltransferase</keyword>
<keyword id="KW-1185">Reference proteome</keyword>
<keyword id="KW-0804">Transcription</keyword>
<keyword id="KW-0808">Transferase</keyword>
<keyword id="KW-0862">Zinc</keyword>
<feature type="chain" id="PRO_0000353398" description="DNA-directed RNA polymerase subunit beta'">
    <location>
        <begin position="1"/>
        <end position="1384"/>
    </location>
</feature>
<feature type="binding site" evidence="1">
    <location>
        <position position="81"/>
    </location>
    <ligand>
        <name>Zn(2+)</name>
        <dbReference type="ChEBI" id="CHEBI:29105"/>
    </ligand>
</feature>
<feature type="binding site" evidence="1">
    <location>
        <position position="83"/>
    </location>
    <ligand>
        <name>Zn(2+)</name>
        <dbReference type="ChEBI" id="CHEBI:29105"/>
    </ligand>
</feature>
<feature type="binding site" evidence="1">
    <location>
        <position position="96"/>
    </location>
    <ligand>
        <name>Zn(2+)</name>
        <dbReference type="ChEBI" id="CHEBI:29105"/>
    </ligand>
</feature>
<feature type="binding site" evidence="1">
    <location>
        <position position="99"/>
    </location>
    <ligand>
        <name>Zn(2+)</name>
        <dbReference type="ChEBI" id="CHEBI:29105"/>
    </ligand>
</feature>
<feature type="binding site" evidence="1">
    <location>
        <position position="472"/>
    </location>
    <ligand>
        <name>Mg(2+)</name>
        <dbReference type="ChEBI" id="CHEBI:18420"/>
    </ligand>
</feature>
<feature type="binding site" evidence="1">
    <location>
        <position position="474"/>
    </location>
    <ligand>
        <name>Mg(2+)</name>
        <dbReference type="ChEBI" id="CHEBI:18420"/>
    </ligand>
</feature>
<feature type="binding site" evidence="1">
    <location>
        <position position="476"/>
    </location>
    <ligand>
        <name>Mg(2+)</name>
        <dbReference type="ChEBI" id="CHEBI:18420"/>
    </ligand>
</feature>
<dbReference type="EC" id="2.7.7.6" evidence="1"/>
<dbReference type="EMBL" id="CP001032">
    <property type="protein sequence ID" value="ACB73522.1"/>
    <property type="molecule type" value="Genomic_DNA"/>
</dbReference>
<dbReference type="SMR" id="B1ZPB7"/>
<dbReference type="STRING" id="452637.Oter_0231"/>
<dbReference type="KEGG" id="ote:Oter_0231"/>
<dbReference type="eggNOG" id="COG0086">
    <property type="taxonomic scope" value="Bacteria"/>
</dbReference>
<dbReference type="HOGENOM" id="CLU_000524_3_1_0"/>
<dbReference type="OrthoDB" id="9815296at2"/>
<dbReference type="Proteomes" id="UP000007013">
    <property type="component" value="Chromosome"/>
</dbReference>
<dbReference type="GO" id="GO:0000428">
    <property type="term" value="C:DNA-directed RNA polymerase complex"/>
    <property type="evidence" value="ECO:0007669"/>
    <property type="project" value="UniProtKB-KW"/>
</dbReference>
<dbReference type="GO" id="GO:0003677">
    <property type="term" value="F:DNA binding"/>
    <property type="evidence" value="ECO:0007669"/>
    <property type="project" value="UniProtKB-UniRule"/>
</dbReference>
<dbReference type="GO" id="GO:0003899">
    <property type="term" value="F:DNA-directed RNA polymerase activity"/>
    <property type="evidence" value="ECO:0007669"/>
    <property type="project" value="UniProtKB-UniRule"/>
</dbReference>
<dbReference type="GO" id="GO:0000287">
    <property type="term" value="F:magnesium ion binding"/>
    <property type="evidence" value="ECO:0007669"/>
    <property type="project" value="UniProtKB-UniRule"/>
</dbReference>
<dbReference type="GO" id="GO:0008270">
    <property type="term" value="F:zinc ion binding"/>
    <property type="evidence" value="ECO:0007669"/>
    <property type="project" value="UniProtKB-UniRule"/>
</dbReference>
<dbReference type="GO" id="GO:0006351">
    <property type="term" value="P:DNA-templated transcription"/>
    <property type="evidence" value="ECO:0007669"/>
    <property type="project" value="UniProtKB-UniRule"/>
</dbReference>
<dbReference type="CDD" id="cd02655">
    <property type="entry name" value="RNAP_beta'_C"/>
    <property type="match status" value="1"/>
</dbReference>
<dbReference type="CDD" id="cd01609">
    <property type="entry name" value="RNAP_beta'_N"/>
    <property type="match status" value="1"/>
</dbReference>
<dbReference type="FunFam" id="1.10.132.30:FF:000003">
    <property type="entry name" value="DNA-directed RNA polymerase subunit beta"/>
    <property type="match status" value="1"/>
</dbReference>
<dbReference type="Gene3D" id="1.10.132.30">
    <property type="match status" value="1"/>
</dbReference>
<dbReference type="Gene3D" id="1.10.150.390">
    <property type="match status" value="1"/>
</dbReference>
<dbReference type="Gene3D" id="1.10.1790.20">
    <property type="match status" value="1"/>
</dbReference>
<dbReference type="Gene3D" id="1.10.40.90">
    <property type="match status" value="1"/>
</dbReference>
<dbReference type="Gene3D" id="2.40.40.20">
    <property type="match status" value="1"/>
</dbReference>
<dbReference type="Gene3D" id="2.40.50.100">
    <property type="match status" value="3"/>
</dbReference>
<dbReference type="Gene3D" id="4.10.860.120">
    <property type="entry name" value="RNA polymerase II, clamp domain"/>
    <property type="match status" value="1"/>
</dbReference>
<dbReference type="Gene3D" id="1.10.274.100">
    <property type="entry name" value="RNA polymerase Rpb1, domain 3"/>
    <property type="match status" value="1"/>
</dbReference>
<dbReference type="HAMAP" id="MF_01322">
    <property type="entry name" value="RNApol_bact_RpoC"/>
    <property type="match status" value="1"/>
</dbReference>
<dbReference type="InterPro" id="IPR045867">
    <property type="entry name" value="DNA-dir_RpoC_beta_prime"/>
</dbReference>
<dbReference type="InterPro" id="IPR012754">
    <property type="entry name" value="DNA-dir_RpoC_beta_prime_bact"/>
</dbReference>
<dbReference type="InterPro" id="IPR000722">
    <property type="entry name" value="RNA_pol_asu"/>
</dbReference>
<dbReference type="InterPro" id="IPR006592">
    <property type="entry name" value="RNA_pol_N"/>
</dbReference>
<dbReference type="InterPro" id="IPR007080">
    <property type="entry name" value="RNA_pol_Rpb1_1"/>
</dbReference>
<dbReference type="InterPro" id="IPR007066">
    <property type="entry name" value="RNA_pol_Rpb1_3"/>
</dbReference>
<dbReference type="InterPro" id="IPR042102">
    <property type="entry name" value="RNA_pol_Rpb1_3_sf"/>
</dbReference>
<dbReference type="InterPro" id="IPR007083">
    <property type="entry name" value="RNA_pol_Rpb1_4"/>
</dbReference>
<dbReference type="InterPro" id="IPR007081">
    <property type="entry name" value="RNA_pol_Rpb1_5"/>
</dbReference>
<dbReference type="InterPro" id="IPR044893">
    <property type="entry name" value="RNA_pol_Rpb1_clamp_domain"/>
</dbReference>
<dbReference type="InterPro" id="IPR038120">
    <property type="entry name" value="Rpb1_funnel_sf"/>
</dbReference>
<dbReference type="NCBIfam" id="TIGR02386">
    <property type="entry name" value="rpoC_TIGR"/>
    <property type="match status" value="1"/>
</dbReference>
<dbReference type="PANTHER" id="PTHR19376">
    <property type="entry name" value="DNA-DIRECTED RNA POLYMERASE"/>
    <property type="match status" value="1"/>
</dbReference>
<dbReference type="PANTHER" id="PTHR19376:SF54">
    <property type="entry name" value="DNA-DIRECTED RNA POLYMERASE SUBUNIT BETA"/>
    <property type="match status" value="1"/>
</dbReference>
<dbReference type="Pfam" id="PF04997">
    <property type="entry name" value="RNA_pol_Rpb1_1"/>
    <property type="match status" value="1"/>
</dbReference>
<dbReference type="Pfam" id="PF00623">
    <property type="entry name" value="RNA_pol_Rpb1_2"/>
    <property type="match status" value="2"/>
</dbReference>
<dbReference type="Pfam" id="PF04983">
    <property type="entry name" value="RNA_pol_Rpb1_3"/>
    <property type="match status" value="1"/>
</dbReference>
<dbReference type="Pfam" id="PF05000">
    <property type="entry name" value="RNA_pol_Rpb1_4"/>
    <property type="match status" value="1"/>
</dbReference>
<dbReference type="Pfam" id="PF04998">
    <property type="entry name" value="RNA_pol_Rpb1_5"/>
    <property type="match status" value="1"/>
</dbReference>
<dbReference type="SMART" id="SM00663">
    <property type="entry name" value="RPOLA_N"/>
    <property type="match status" value="1"/>
</dbReference>
<dbReference type="SUPFAM" id="SSF64484">
    <property type="entry name" value="beta and beta-prime subunits of DNA dependent RNA-polymerase"/>
    <property type="match status" value="1"/>
</dbReference>
<name>RPOC_OPITP</name>
<proteinExistence type="inferred from homology"/>
<protein>
    <recommendedName>
        <fullName evidence="1">DNA-directed RNA polymerase subunit beta'</fullName>
        <shortName evidence="1">RNAP subunit beta'</shortName>
        <ecNumber evidence="1">2.7.7.6</ecNumber>
    </recommendedName>
    <alternativeName>
        <fullName evidence="1">RNA polymerase subunit beta'</fullName>
    </alternativeName>
    <alternativeName>
        <fullName evidence="1">Transcriptase subunit beta'</fullName>
    </alternativeName>
</protein>
<organism>
    <name type="scientific">Opitutus terrae (strain DSM 11246 / JCM 15787 / PB90-1)</name>
    <dbReference type="NCBI Taxonomy" id="452637"/>
    <lineage>
        <taxon>Bacteria</taxon>
        <taxon>Pseudomonadati</taxon>
        <taxon>Verrucomicrobiota</taxon>
        <taxon>Opitutia</taxon>
        <taxon>Opitutales</taxon>
        <taxon>Opitutaceae</taxon>
        <taxon>Opitutus</taxon>
    </lineage>
</organism>
<evidence type="ECO:0000255" key="1">
    <source>
        <dbReference type="HAMAP-Rule" id="MF_01322"/>
    </source>
</evidence>
<evidence type="ECO:0000305" key="2"/>
<gene>
    <name evidence="1" type="primary">rpoC</name>
    <name type="ordered locus">Oter_0231</name>
</gene>